<protein>
    <recommendedName>
        <fullName evidence="1">4-hydroxy-3-methylbut-2-en-1-yl diphosphate synthase (flavodoxin)</fullName>
        <ecNumber evidence="1">1.17.7.3</ecNumber>
    </recommendedName>
    <alternativeName>
        <fullName evidence="1">1-hydroxy-2-methyl-2-(E)-butenyl 4-diphosphate synthase</fullName>
    </alternativeName>
</protein>
<evidence type="ECO:0000255" key="1">
    <source>
        <dbReference type="HAMAP-Rule" id="MF_00159"/>
    </source>
</evidence>
<keyword id="KW-0004">4Fe-4S</keyword>
<keyword id="KW-0408">Iron</keyword>
<keyword id="KW-0411">Iron-sulfur</keyword>
<keyword id="KW-0414">Isoprene biosynthesis</keyword>
<keyword id="KW-0479">Metal-binding</keyword>
<keyword id="KW-0560">Oxidoreductase</keyword>
<keyword id="KW-1185">Reference proteome</keyword>
<gene>
    <name evidence="1" type="primary">ispG</name>
    <name type="ordered locus">RHE_CH04009</name>
</gene>
<accession>Q2K333</accession>
<comment type="function">
    <text evidence="1">Converts 2C-methyl-D-erythritol 2,4-cyclodiphosphate (ME-2,4cPP) into 1-hydroxy-2-methyl-2-(E)-butenyl 4-diphosphate.</text>
</comment>
<comment type="catalytic activity">
    <reaction evidence="1">
        <text>(2E)-4-hydroxy-3-methylbut-2-enyl diphosphate + oxidized [flavodoxin] + H2O + 2 H(+) = 2-C-methyl-D-erythritol 2,4-cyclic diphosphate + reduced [flavodoxin]</text>
        <dbReference type="Rhea" id="RHEA:43604"/>
        <dbReference type="Rhea" id="RHEA-COMP:10622"/>
        <dbReference type="Rhea" id="RHEA-COMP:10623"/>
        <dbReference type="ChEBI" id="CHEBI:15377"/>
        <dbReference type="ChEBI" id="CHEBI:15378"/>
        <dbReference type="ChEBI" id="CHEBI:57618"/>
        <dbReference type="ChEBI" id="CHEBI:58210"/>
        <dbReference type="ChEBI" id="CHEBI:58483"/>
        <dbReference type="ChEBI" id="CHEBI:128753"/>
        <dbReference type="EC" id="1.17.7.3"/>
    </reaction>
</comment>
<comment type="cofactor">
    <cofactor evidence="1">
        <name>[4Fe-4S] cluster</name>
        <dbReference type="ChEBI" id="CHEBI:49883"/>
    </cofactor>
    <text evidence="1">Binds 1 [4Fe-4S] cluster.</text>
</comment>
<comment type="pathway">
    <text evidence="1">Isoprenoid biosynthesis; isopentenyl diphosphate biosynthesis via DXP pathway; isopentenyl diphosphate from 1-deoxy-D-xylulose 5-phosphate: step 5/6.</text>
</comment>
<comment type="similarity">
    <text evidence="1">Belongs to the IspG family.</text>
</comment>
<name>ISPG_RHIEC</name>
<sequence>MLSAADFDPKPRRASVAVDVGGVIVGGGAPIVVQSMTNTDTADIDSTVAQVAALHRAGSELVRITVDRDESAAAVPKIRERLLRLGMDVPLIGDFHYIGHKLLADHPACAEALAKYRINPGNVGFKDKKDKQFAEIIEMAIRYDKPVRIGVNWGSLDQDLLTALMDENAAAGSPLSARQVTREAIVQSALLSAALAEEIGLPRNRIILSAKVSQVQDLIAVNSMLAERSNHALHLGLTEAGMGSKGIVASSAAMGFVLQHGIGDTIRVSLTPEPNGDRTREVQVAQEILQVMGFRQFVPVVAACPGCGRTTSTVFQELAQNIQNDIRKNMPVWREKYPGVEALNVAVMGCIVNGPGESKHADIGISLPGTGETPAAPVFIDGKKALTLRGPNIAADFEALVVDYIEKRFGRQTAAE</sequence>
<feature type="chain" id="PRO_1000011506" description="4-hydroxy-3-methylbut-2-en-1-yl diphosphate synthase (flavodoxin)">
    <location>
        <begin position="1"/>
        <end position="416"/>
    </location>
</feature>
<feature type="binding site" evidence="1">
    <location>
        <position position="304"/>
    </location>
    <ligand>
        <name>[4Fe-4S] cluster</name>
        <dbReference type="ChEBI" id="CHEBI:49883"/>
    </ligand>
</feature>
<feature type="binding site" evidence="1">
    <location>
        <position position="307"/>
    </location>
    <ligand>
        <name>[4Fe-4S] cluster</name>
        <dbReference type="ChEBI" id="CHEBI:49883"/>
    </ligand>
</feature>
<feature type="binding site" evidence="1">
    <location>
        <position position="350"/>
    </location>
    <ligand>
        <name>[4Fe-4S] cluster</name>
        <dbReference type="ChEBI" id="CHEBI:49883"/>
    </ligand>
</feature>
<feature type="binding site" evidence="1">
    <location>
        <position position="357"/>
    </location>
    <ligand>
        <name>[4Fe-4S] cluster</name>
        <dbReference type="ChEBI" id="CHEBI:49883"/>
    </ligand>
</feature>
<organism>
    <name type="scientific">Rhizobium etli (strain ATCC 51251 / DSM 11541 / JCM 21823 / NBRC 15573 / CFN 42)</name>
    <dbReference type="NCBI Taxonomy" id="347834"/>
    <lineage>
        <taxon>Bacteria</taxon>
        <taxon>Pseudomonadati</taxon>
        <taxon>Pseudomonadota</taxon>
        <taxon>Alphaproteobacteria</taxon>
        <taxon>Hyphomicrobiales</taxon>
        <taxon>Rhizobiaceae</taxon>
        <taxon>Rhizobium/Agrobacterium group</taxon>
        <taxon>Rhizobium</taxon>
    </lineage>
</organism>
<dbReference type="EC" id="1.17.7.3" evidence="1"/>
<dbReference type="EMBL" id="CP000133">
    <property type="protein sequence ID" value="ABC92753.1"/>
    <property type="molecule type" value="Genomic_DNA"/>
</dbReference>
<dbReference type="RefSeq" id="WP_011427197.1">
    <property type="nucleotide sequence ID" value="NC_007761.1"/>
</dbReference>
<dbReference type="SMR" id="Q2K333"/>
<dbReference type="KEGG" id="ret:RHE_CH04009"/>
<dbReference type="eggNOG" id="COG0821">
    <property type="taxonomic scope" value="Bacteria"/>
</dbReference>
<dbReference type="HOGENOM" id="CLU_042258_1_0_5"/>
<dbReference type="OrthoDB" id="9803214at2"/>
<dbReference type="UniPathway" id="UPA00056">
    <property type="reaction ID" value="UER00096"/>
</dbReference>
<dbReference type="Proteomes" id="UP000001936">
    <property type="component" value="Chromosome"/>
</dbReference>
<dbReference type="GO" id="GO:0051539">
    <property type="term" value="F:4 iron, 4 sulfur cluster binding"/>
    <property type="evidence" value="ECO:0007669"/>
    <property type="project" value="UniProtKB-UniRule"/>
</dbReference>
<dbReference type="GO" id="GO:0046429">
    <property type="term" value="F:4-hydroxy-3-methylbut-2-en-1-yl diphosphate synthase activity (ferredoxin)"/>
    <property type="evidence" value="ECO:0007669"/>
    <property type="project" value="UniProtKB-UniRule"/>
</dbReference>
<dbReference type="GO" id="GO:0141197">
    <property type="term" value="F:4-hydroxy-3-methylbut-2-enyl-diphosphate synthase activity (flavodoxin)"/>
    <property type="evidence" value="ECO:0007669"/>
    <property type="project" value="UniProtKB-EC"/>
</dbReference>
<dbReference type="GO" id="GO:0005506">
    <property type="term" value="F:iron ion binding"/>
    <property type="evidence" value="ECO:0007669"/>
    <property type="project" value="InterPro"/>
</dbReference>
<dbReference type="GO" id="GO:0019288">
    <property type="term" value="P:isopentenyl diphosphate biosynthetic process, methylerythritol 4-phosphate pathway"/>
    <property type="evidence" value="ECO:0007669"/>
    <property type="project" value="UniProtKB-UniRule"/>
</dbReference>
<dbReference type="GO" id="GO:0016114">
    <property type="term" value="P:terpenoid biosynthetic process"/>
    <property type="evidence" value="ECO:0007669"/>
    <property type="project" value="InterPro"/>
</dbReference>
<dbReference type="FunFam" id="3.30.413.10:FF:000012">
    <property type="entry name" value="4-hydroxy-3-methylbut-2-en-1-yl diphosphate synthase (flavodoxin)"/>
    <property type="match status" value="1"/>
</dbReference>
<dbReference type="Gene3D" id="3.20.20.20">
    <property type="entry name" value="Dihydropteroate synthase-like"/>
    <property type="match status" value="1"/>
</dbReference>
<dbReference type="Gene3D" id="3.30.413.10">
    <property type="entry name" value="Sulfite Reductase Hemoprotein, domain 1"/>
    <property type="match status" value="1"/>
</dbReference>
<dbReference type="HAMAP" id="MF_00159">
    <property type="entry name" value="IspG"/>
    <property type="match status" value="1"/>
</dbReference>
<dbReference type="InterPro" id="IPR011005">
    <property type="entry name" value="Dihydropteroate_synth-like_sf"/>
</dbReference>
<dbReference type="InterPro" id="IPR016425">
    <property type="entry name" value="IspG_bac"/>
</dbReference>
<dbReference type="InterPro" id="IPR004588">
    <property type="entry name" value="IspG_bac-typ"/>
</dbReference>
<dbReference type="InterPro" id="IPR045854">
    <property type="entry name" value="NO2/SO3_Rdtase_4Fe4S_sf"/>
</dbReference>
<dbReference type="NCBIfam" id="TIGR00612">
    <property type="entry name" value="ispG_gcpE"/>
    <property type="match status" value="1"/>
</dbReference>
<dbReference type="NCBIfam" id="NF001540">
    <property type="entry name" value="PRK00366.1"/>
    <property type="match status" value="1"/>
</dbReference>
<dbReference type="PANTHER" id="PTHR30454">
    <property type="entry name" value="4-HYDROXY-3-METHYLBUT-2-EN-1-YL DIPHOSPHATE SYNTHASE"/>
    <property type="match status" value="1"/>
</dbReference>
<dbReference type="PANTHER" id="PTHR30454:SF0">
    <property type="entry name" value="4-HYDROXY-3-METHYLBUT-2-EN-1-YL DIPHOSPHATE SYNTHASE (FERREDOXIN), CHLOROPLASTIC"/>
    <property type="match status" value="1"/>
</dbReference>
<dbReference type="Pfam" id="PF04551">
    <property type="entry name" value="GcpE"/>
    <property type="match status" value="1"/>
</dbReference>
<dbReference type="PIRSF" id="PIRSF004640">
    <property type="entry name" value="IspG"/>
    <property type="match status" value="1"/>
</dbReference>
<dbReference type="SUPFAM" id="SSF56014">
    <property type="entry name" value="Nitrite and sulphite reductase 4Fe-4S domain-like"/>
    <property type="match status" value="1"/>
</dbReference>
<proteinExistence type="inferred from homology"/>
<reference key="1">
    <citation type="journal article" date="2006" name="Proc. Natl. Acad. Sci. U.S.A.">
        <title>The partitioned Rhizobium etli genome: genetic and metabolic redundancy in seven interacting replicons.</title>
        <authorList>
            <person name="Gonzalez V."/>
            <person name="Santamaria R.I."/>
            <person name="Bustos P."/>
            <person name="Hernandez-Gonzalez I."/>
            <person name="Medrano-Soto A."/>
            <person name="Moreno-Hagelsieb G."/>
            <person name="Janga S.C."/>
            <person name="Ramirez M.A."/>
            <person name="Jimenez-Jacinto V."/>
            <person name="Collado-Vides J."/>
            <person name="Davila G."/>
        </authorList>
    </citation>
    <scope>NUCLEOTIDE SEQUENCE [LARGE SCALE GENOMIC DNA]</scope>
    <source>
        <strain>ATCC 51251 / DSM 11541 / JCM 21823 / NBRC 15573 / CFN 42</strain>
    </source>
</reference>